<sequence>MPNSTLTLAQMLIARRSLTPDDDGCQKILVHRLAGLGFNSEAMNFGEVENLWTRKGIDGPLVCFVGHTDVVPTGPVAQWDSDPFTPTVRDGFLYGRGAADMKSSIAAFVTAIEEFVELHPDHKGSIALLITSDEEGPAVEGTVKVVETLQARGEVIDYCIVGEPTCTDRLGDTIKNGRRGSLSGNLTVKGIQGHIAYPHLARNPIHTAAPAIAELAQTVWDDGNEYFPATTWHISNIRGGTGATNVIPGEVNLLFNFRFSTASTVESLKTRVHEILDRHGLEYELVWELSGKPYLTPKGILADALSAAIREVTGVEPELSTSGGTSDGRFIADICSQVVEFGPRNATIHKINESVEVADIERLSRIYRLTLEKLLLQD</sequence>
<keyword id="KW-0028">Amino-acid biosynthesis</keyword>
<keyword id="KW-0170">Cobalt</keyword>
<keyword id="KW-0220">Diaminopimelate biosynthesis</keyword>
<keyword id="KW-0378">Hydrolase</keyword>
<keyword id="KW-0457">Lysine biosynthesis</keyword>
<keyword id="KW-0479">Metal-binding</keyword>
<keyword id="KW-0862">Zinc</keyword>
<name>DAPE_NITEC</name>
<feature type="chain" id="PRO_0000375632" description="Succinyl-diaminopimelate desuccinylase">
    <location>
        <begin position="1"/>
        <end position="378"/>
    </location>
</feature>
<feature type="active site" evidence="1">
    <location>
        <position position="69"/>
    </location>
</feature>
<feature type="active site" description="Proton acceptor" evidence="1">
    <location>
        <position position="134"/>
    </location>
</feature>
<feature type="binding site" evidence="1">
    <location>
        <position position="67"/>
    </location>
    <ligand>
        <name>Zn(2+)</name>
        <dbReference type="ChEBI" id="CHEBI:29105"/>
        <label>1</label>
    </ligand>
</feature>
<feature type="binding site" evidence="1">
    <location>
        <position position="100"/>
    </location>
    <ligand>
        <name>Zn(2+)</name>
        <dbReference type="ChEBI" id="CHEBI:29105"/>
        <label>1</label>
    </ligand>
</feature>
<feature type="binding site" evidence="1">
    <location>
        <position position="100"/>
    </location>
    <ligand>
        <name>Zn(2+)</name>
        <dbReference type="ChEBI" id="CHEBI:29105"/>
        <label>2</label>
    </ligand>
</feature>
<feature type="binding site" evidence="1">
    <location>
        <position position="135"/>
    </location>
    <ligand>
        <name>Zn(2+)</name>
        <dbReference type="ChEBI" id="CHEBI:29105"/>
        <label>2</label>
    </ligand>
</feature>
<feature type="binding site" evidence="1">
    <location>
        <position position="163"/>
    </location>
    <ligand>
        <name>Zn(2+)</name>
        <dbReference type="ChEBI" id="CHEBI:29105"/>
        <label>1</label>
    </ligand>
</feature>
<feature type="binding site" evidence="1">
    <location>
        <position position="349"/>
    </location>
    <ligand>
        <name>Zn(2+)</name>
        <dbReference type="ChEBI" id="CHEBI:29105"/>
        <label>2</label>
    </ligand>
</feature>
<organism>
    <name type="scientific">Nitrosomonas eutropha (strain DSM 101675 / C91 / Nm57)</name>
    <dbReference type="NCBI Taxonomy" id="335283"/>
    <lineage>
        <taxon>Bacteria</taxon>
        <taxon>Pseudomonadati</taxon>
        <taxon>Pseudomonadota</taxon>
        <taxon>Betaproteobacteria</taxon>
        <taxon>Nitrosomonadales</taxon>
        <taxon>Nitrosomonadaceae</taxon>
        <taxon>Nitrosomonas</taxon>
    </lineage>
</organism>
<evidence type="ECO:0000255" key="1">
    <source>
        <dbReference type="HAMAP-Rule" id="MF_01690"/>
    </source>
</evidence>
<gene>
    <name evidence="1" type="primary">dapE</name>
    <name type="ordered locus">Neut_2234</name>
</gene>
<protein>
    <recommendedName>
        <fullName evidence="1">Succinyl-diaminopimelate desuccinylase</fullName>
        <shortName evidence="1">SDAP desuccinylase</shortName>
        <ecNumber evidence="1">3.5.1.18</ecNumber>
    </recommendedName>
    <alternativeName>
        <fullName evidence="1">N-succinyl-LL-2,6-diaminoheptanedioate amidohydrolase</fullName>
    </alternativeName>
</protein>
<dbReference type="EC" id="3.5.1.18" evidence="1"/>
<dbReference type="EMBL" id="CP000450">
    <property type="protein sequence ID" value="ABI60452.1"/>
    <property type="molecule type" value="Genomic_DNA"/>
</dbReference>
<dbReference type="RefSeq" id="WP_011635243.1">
    <property type="nucleotide sequence ID" value="NC_008344.1"/>
</dbReference>
<dbReference type="SMR" id="Q0ADY0"/>
<dbReference type="STRING" id="335283.Neut_2234"/>
<dbReference type="KEGG" id="net:Neut_2234"/>
<dbReference type="eggNOG" id="COG0624">
    <property type="taxonomic scope" value="Bacteria"/>
</dbReference>
<dbReference type="HOGENOM" id="CLU_021802_4_0_4"/>
<dbReference type="OrthoDB" id="9809784at2"/>
<dbReference type="UniPathway" id="UPA00034">
    <property type="reaction ID" value="UER00021"/>
</dbReference>
<dbReference type="Proteomes" id="UP000001966">
    <property type="component" value="Chromosome"/>
</dbReference>
<dbReference type="GO" id="GO:0008777">
    <property type="term" value="F:acetylornithine deacetylase activity"/>
    <property type="evidence" value="ECO:0007669"/>
    <property type="project" value="TreeGrafter"/>
</dbReference>
<dbReference type="GO" id="GO:0050897">
    <property type="term" value="F:cobalt ion binding"/>
    <property type="evidence" value="ECO:0007669"/>
    <property type="project" value="UniProtKB-UniRule"/>
</dbReference>
<dbReference type="GO" id="GO:0009014">
    <property type="term" value="F:succinyl-diaminopimelate desuccinylase activity"/>
    <property type="evidence" value="ECO:0007669"/>
    <property type="project" value="UniProtKB-UniRule"/>
</dbReference>
<dbReference type="GO" id="GO:0008270">
    <property type="term" value="F:zinc ion binding"/>
    <property type="evidence" value="ECO:0007669"/>
    <property type="project" value="UniProtKB-UniRule"/>
</dbReference>
<dbReference type="GO" id="GO:0019877">
    <property type="term" value="P:diaminopimelate biosynthetic process"/>
    <property type="evidence" value="ECO:0007669"/>
    <property type="project" value="UniProtKB-UniRule"/>
</dbReference>
<dbReference type="GO" id="GO:0006526">
    <property type="term" value="P:L-arginine biosynthetic process"/>
    <property type="evidence" value="ECO:0007669"/>
    <property type="project" value="TreeGrafter"/>
</dbReference>
<dbReference type="GO" id="GO:0009089">
    <property type="term" value="P:lysine biosynthetic process via diaminopimelate"/>
    <property type="evidence" value="ECO:0007669"/>
    <property type="project" value="UniProtKB-UniRule"/>
</dbReference>
<dbReference type="CDD" id="cd03891">
    <property type="entry name" value="M20_DapE_proteobac"/>
    <property type="match status" value="1"/>
</dbReference>
<dbReference type="FunFam" id="3.30.70.360:FF:000011">
    <property type="entry name" value="Succinyl-diaminopimelate desuccinylase"/>
    <property type="match status" value="1"/>
</dbReference>
<dbReference type="FunFam" id="3.40.630.10:FF:000005">
    <property type="entry name" value="Succinyl-diaminopimelate desuccinylase"/>
    <property type="match status" value="1"/>
</dbReference>
<dbReference type="Gene3D" id="3.40.630.10">
    <property type="entry name" value="Zn peptidases"/>
    <property type="match status" value="2"/>
</dbReference>
<dbReference type="HAMAP" id="MF_01690">
    <property type="entry name" value="DapE"/>
    <property type="match status" value="1"/>
</dbReference>
<dbReference type="InterPro" id="IPR001261">
    <property type="entry name" value="ArgE/DapE_CS"/>
</dbReference>
<dbReference type="InterPro" id="IPR036264">
    <property type="entry name" value="Bact_exopeptidase_dim_dom"/>
</dbReference>
<dbReference type="InterPro" id="IPR005941">
    <property type="entry name" value="DapE_proteobac"/>
</dbReference>
<dbReference type="InterPro" id="IPR002933">
    <property type="entry name" value="Peptidase_M20"/>
</dbReference>
<dbReference type="InterPro" id="IPR011650">
    <property type="entry name" value="Peptidase_M20_dimer"/>
</dbReference>
<dbReference type="InterPro" id="IPR050072">
    <property type="entry name" value="Peptidase_M20A"/>
</dbReference>
<dbReference type="NCBIfam" id="TIGR01246">
    <property type="entry name" value="dapE_proteo"/>
    <property type="match status" value="1"/>
</dbReference>
<dbReference type="NCBIfam" id="NF009557">
    <property type="entry name" value="PRK13009.1"/>
    <property type="match status" value="1"/>
</dbReference>
<dbReference type="PANTHER" id="PTHR43808">
    <property type="entry name" value="ACETYLORNITHINE DEACETYLASE"/>
    <property type="match status" value="1"/>
</dbReference>
<dbReference type="PANTHER" id="PTHR43808:SF31">
    <property type="entry name" value="N-ACETYL-L-CITRULLINE DEACETYLASE"/>
    <property type="match status" value="1"/>
</dbReference>
<dbReference type="Pfam" id="PF07687">
    <property type="entry name" value="M20_dimer"/>
    <property type="match status" value="1"/>
</dbReference>
<dbReference type="Pfam" id="PF01546">
    <property type="entry name" value="Peptidase_M20"/>
    <property type="match status" value="1"/>
</dbReference>
<dbReference type="SUPFAM" id="SSF55031">
    <property type="entry name" value="Bacterial exopeptidase dimerisation domain"/>
    <property type="match status" value="1"/>
</dbReference>
<dbReference type="SUPFAM" id="SSF53187">
    <property type="entry name" value="Zn-dependent exopeptidases"/>
    <property type="match status" value="1"/>
</dbReference>
<dbReference type="PROSITE" id="PS00759">
    <property type="entry name" value="ARGE_DAPE_CPG2_2"/>
    <property type="match status" value="1"/>
</dbReference>
<comment type="function">
    <text evidence="1">Catalyzes the hydrolysis of N-succinyl-L,L-diaminopimelic acid (SDAP), forming succinate and LL-2,6-diaminopimelate (DAP), an intermediate involved in the bacterial biosynthesis of lysine and meso-diaminopimelic acid, an essential component of bacterial cell walls.</text>
</comment>
<comment type="catalytic activity">
    <reaction evidence="1">
        <text>N-succinyl-(2S,6S)-2,6-diaminopimelate + H2O = (2S,6S)-2,6-diaminopimelate + succinate</text>
        <dbReference type="Rhea" id="RHEA:22608"/>
        <dbReference type="ChEBI" id="CHEBI:15377"/>
        <dbReference type="ChEBI" id="CHEBI:30031"/>
        <dbReference type="ChEBI" id="CHEBI:57609"/>
        <dbReference type="ChEBI" id="CHEBI:58087"/>
        <dbReference type="EC" id="3.5.1.18"/>
    </reaction>
</comment>
<comment type="cofactor">
    <cofactor evidence="1">
        <name>Zn(2+)</name>
        <dbReference type="ChEBI" id="CHEBI:29105"/>
    </cofactor>
    <cofactor evidence="1">
        <name>Co(2+)</name>
        <dbReference type="ChEBI" id="CHEBI:48828"/>
    </cofactor>
    <text evidence="1">Binds 2 Zn(2+) or Co(2+) ions per subunit.</text>
</comment>
<comment type="pathway">
    <text evidence="1">Amino-acid biosynthesis; L-lysine biosynthesis via DAP pathway; LL-2,6-diaminopimelate from (S)-tetrahydrodipicolinate (succinylase route): step 3/3.</text>
</comment>
<comment type="subunit">
    <text evidence="1">Homodimer.</text>
</comment>
<comment type="similarity">
    <text evidence="1">Belongs to the peptidase M20A family. DapE subfamily.</text>
</comment>
<proteinExistence type="inferred from homology"/>
<accession>Q0ADY0</accession>
<reference key="1">
    <citation type="journal article" date="2007" name="Environ. Microbiol.">
        <title>Whole-genome analysis of the ammonia-oxidizing bacterium, Nitrosomonas eutropha C91: implications for niche adaptation.</title>
        <authorList>
            <person name="Stein L.Y."/>
            <person name="Arp D.J."/>
            <person name="Berube P.M."/>
            <person name="Chain P.S."/>
            <person name="Hauser L."/>
            <person name="Jetten M.S."/>
            <person name="Klotz M.G."/>
            <person name="Larimer F.W."/>
            <person name="Norton J.M."/>
            <person name="Op den Camp H.J.M."/>
            <person name="Shin M."/>
            <person name="Wei X."/>
        </authorList>
    </citation>
    <scope>NUCLEOTIDE SEQUENCE [LARGE SCALE GENOMIC DNA]</scope>
    <source>
        <strain>DSM 101675 / C91 / Nm57</strain>
    </source>
</reference>